<comment type="function">
    <text evidence="1">Catalyzes the last two sequential reactions in the de novo biosynthetic pathway for UDP-N-acetylglucosamine (UDP-GlcNAc). The C-terminal domain catalyzes the transfer of acetyl group from acetyl coenzyme A to glucosamine-1-phosphate (GlcN-1-P) to produce N-acetylglucosamine-1-phosphate (GlcNAc-1-P), which is converted into UDP-GlcNAc by the transfer of uridine 5-monophosphate (from uridine 5-triphosphate), a reaction catalyzed by the N-terminal domain.</text>
</comment>
<comment type="catalytic activity">
    <reaction evidence="1">
        <text>alpha-D-glucosamine 1-phosphate + acetyl-CoA = N-acetyl-alpha-D-glucosamine 1-phosphate + CoA + H(+)</text>
        <dbReference type="Rhea" id="RHEA:13725"/>
        <dbReference type="ChEBI" id="CHEBI:15378"/>
        <dbReference type="ChEBI" id="CHEBI:57287"/>
        <dbReference type="ChEBI" id="CHEBI:57288"/>
        <dbReference type="ChEBI" id="CHEBI:57776"/>
        <dbReference type="ChEBI" id="CHEBI:58516"/>
        <dbReference type="EC" id="2.3.1.157"/>
    </reaction>
</comment>
<comment type="catalytic activity">
    <reaction evidence="1">
        <text>N-acetyl-alpha-D-glucosamine 1-phosphate + UTP + H(+) = UDP-N-acetyl-alpha-D-glucosamine + diphosphate</text>
        <dbReference type="Rhea" id="RHEA:13509"/>
        <dbReference type="ChEBI" id="CHEBI:15378"/>
        <dbReference type="ChEBI" id="CHEBI:33019"/>
        <dbReference type="ChEBI" id="CHEBI:46398"/>
        <dbReference type="ChEBI" id="CHEBI:57705"/>
        <dbReference type="ChEBI" id="CHEBI:57776"/>
        <dbReference type="EC" id="2.7.7.23"/>
    </reaction>
</comment>
<comment type="cofactor">
    <cofactor evidence="1">
        <name>Mg(2+)</name>
        <dbReference type="ChEBI" id="CHEBI:18420"/>
    </cofactor>
    <text evidence="1">Binds 1 Mg(2+) ion per subunit.</text>
</comment>
<comment type="pathway">
    <text evidence="1">Nucleotide-sugar biosynthesis; UDP-N-acetyl-alpha-D-glucosamine biosynthesis; N-acetyl-alpha-D-glucosamine 1-phosphate from alpha-D-glucosamine 6-phosphate (route II): step 2/2.</text>
</comment>
<comment type="pathway">
    <text evidence="1">Nucleotide-sugar biosynthesis; UDP-N-acetyl-alpha-D-glucosamine biosynthesis; UDP-N-acetyl-alpha-D-glucosamine from N-acetyl-alpha-D-glucosamine 1-phosphate: step 1/1.</text>
</comment>
<comment type="pathway">
    <text evidence="1">Bacterial outer membrane biogenesis; LPS lipid A biosynthesis.</text>
</comment>
<comment type="subunit">
    <text evidence="1">Homotrimer.</text>
</comment>
<comment type="subcellular location">
    <subcellularLocation>
        <location evidence="1">Cytoplasm</location>
    </subcellularLocation>
</comment>
<comment type="similarity">
    <text evidence="1">In the N-terminal section; belongs to the N-acetylglucosamine-1-phosphate uridyltransferase family.</text>
</comment>
<comment type="similarity">
    <text evidence="1">In the C-terminal section; belongs to the transferase hexapeptide repeat family.</text>
</comment>
<accession>Q4L3F6</accession>
<name>GLMU_STAHJ</name>
<dbReference type="EC" id="2.7.7.23" evidence="1"/>
<dbReference type="EC" id="2.3.1.157" evidence="1"/>
<dbReference type="EMBL" id="AP006716">
    <property type="protein sequence ID" value="BAE05821.1"/>
    <property type="molecule type" value="Genomic_DNA"/>
</dbReference>
<dbReference type="RefSeq" id="WP_011276762.1">
    <property type="nucleotide sequence ID" value="NC_007168.1"/>
</dbReference>
<dbReference type="SMR" id="Q4L3F6"/>
<dbReference type="GeneID" id="93781741"/>
<dbReference type="KEGG" id="sha:SH2512"/>
<dbReference type="eggNOG" id="COG1207">
    <property type="taxonomic scope" value="Bacteria"/>
</dbReference>
<dbReference type="HOGENOM" id="CLU_029499_15_2_9"/>
<dbReference type="OrthoDB" id="9775031at2"/>
<dbReference type="UniPathway" id="UPA00113">
    <property type="reaction ID" value="UER00532"/>
</dbReference>
<dbReference type="UniPathway" id="UPA00113">
    <property type="reaction ID" value="UER00533"/>
</dbReference>
<dbReference type="UniPathway" id="UPA00973"/>
<dbReference type="Proteomes" id="UP000000543">
    <property type="component" value="Chromosome"/>
</dbReference>
<dbReference type="GO" id="GO:0005737">
    <property type="term" value="C:cytoplasm"/>
    <property type="evidence" value="ECO:0007669"/>
    <property type="project" value="UniProtKB-SubCell"/>
</dbReference>
<dbReference type="GO" id="GO:0016020">
    <property type="term" value="C:membrane"/>
    <property type="evidence" value="ECO:0007669"/>
    <property type="project" value="GOC"/>
</dbReference>
<dbReference type="GO" id="GO:0019134">
    <property type="term" value="F:glucosamine-1-phosphate N-acetyltransferase activity"/>
    <property type="evidence" value="ECO:0007669"/>
    <property type="project" value="UniProtKB-UniRule"/>
</dbReference>
<dbReference type="GO" id="GO:0000287">
    <property type="term" value="F:magnesium ion binding"/>
    <property type="evidence" value="ECO:0007669"/>
    <property type="project" value="UniProtKB-UniRule"/>
</dbReference>
<dbReference type="GO" id="GO:0003977">
    <property type="term" value="F:UDP-N-acetylglucosamine diphosphorylase activity"/>
    <property type="evidence" value="ECO:0007669"/>
    <property type="project" value="UniProtKB-UniRule"/>
</dbReference>
<dbReference type="GO" id="GO:0000902">
    <property type="term" value="P:cell morphogenesis"/>
    <property type="evidence" value="ECO:0007669"/>
    <property type="project" value="UniProtKB-UniRule"/>
</dbReference>
<dbReference type="GO" id="GO:0071555">
    <property type="term" value="P:cell wall organization"/>
    <property type="evidence" value="ECO:0007669"/>
    <property type="project" value="UniProtKB-KW"/>
</dbReference>
<dbReference type="GO" id="GO:0009245">
    <property type="term" value="P:lipid A biosynthetic process"/>
    <property type="evidence" value="ECO:0007669"/>
    <property type="project" value="UniProtKB-UniRule"/>
</dbReference>
<dbReference type="GO" id="GO:0009252">
    <property type="term" value="P:peptidoglycan biosynthetic process"/>
    <property type="evidence" value="ECO:0007669"/>
    <property type="project" value="UniProtKB-UniRule"/>
</dbReference>
<dbReference type="GO" id="GO:0008360">
    <property type="term" value="P:regulation of cell shape"/>
    <property type="evidence" value="ECO:0007669"/>
    <property type="project" value="UniProtKB-KW"/>
</dbReference>
<dbReference type="GO" id="GO:0006048">
    <property type="term" value="P:UDP-N-acetylglucosamine biosynthetic process"/>
    <property type="evidence" value="ECO:0007669"/>
    <property type="project" value="UniProtKB-UniPathway"/>
</dbReference>
<dbReference type="CDD" id="cd02540">
    <property type="entry name" value="GT2_GlmU_N_bac"/>
    <property type="match status" value="1"/>
</dbReference>
<dbReference type="CDD" id="cd03353">
    <property type="entry name" value="LbH_GlmU_C"/>
    <property type="match status" value="1"/>
</dbReference>
<dbReference type="Gene3D" id="2.160.10.10">
    <property type="entry name" value="Hexapeptide repeat proteins"/>
    <property type="match status" value="1"/>
</dbReference>
<dbReference type="Gene3D" id="3.90.550.10">
    <property type="entry name" value="Spore Coat Polysaccharide Biosynthesis Protein SpsA, Chain A"/>
    <property type="match status" value="1"/>
</dbReference>
<dbReference type="HAMAP" id="MF_01631">
    <property type="entry name" value="GlmU"/>
    <property type="match status" value="1"/>
</dbReference>
<dbReference type="InterPro" id="IPR005882">
    <property type="entry name" value="Bifunctional_GlmU"/>
</dbReference>
<dbReference type="InterPro" id="IPR050065">
    <property type="entry name" value="GlmU-like"/>
</dbReference>
<dbReference type="InterPro" id="IPR038009">
    <property type="entry name" value="GlmU_C_LbH"/>
</dbReference>
<dbReference type="InterPro" id="IPR001451">
    <property type="entry name" value="Hexapep"/>
</dbReference>
<dbReference type="InterPro" id="IPR018357">
    <property type="entry name" value="Hexapep_transf_CS"/>
</dbReference>
<dbReference type="InterPro" id="IPR005835">
    <property type="entry name" value="NTP_transferase_dom"/>
</dbReference>
<dbReference type="InterPro" id="IPR029044">
    <property type="entry name" value="Nucleotide-diphossugar_trans"/>
</dbReference>
<dbReference type="InterPro" id="IPR011004">
    <property type="entry name" value="Trimer_LpxA-like_sf"/>
</dbReference>
<dbReference type="NCBIfam" id="TIGR01173">
    <property type="entry name" value="glmU"/>
    <property type="match status" value="1"/>
</dbReference>
<dbReference type="NCBIfam" id="NF010934">
    <property type="entry name" value="PRK14354.1"/>
    <property type="match status" value="1"/>
</dbReference>
<dbReference type="PANTHER" id="PTHR43584:SF3">
    <property type="entry name" value="BIFUNCTIONAL PROTEIN GLMU"/>
    <property type="match status" value="1"/>
</dbReference>
<dbReference type="PANTHER" id="PTHR43584">
    <property type="entry name" value="NUCLEOTIDYL TRANSFERASE"/>
    <property type="match status" value="1"/>
</dbReference>
<dbReference type="Pfam" id="PF00132">
    <property type="entry name" value="Hexapep"/>
    <property type="match status" value="2"/>
</dbReference>
<dbReference type="Pfam" id="PF00483">
    <property type="entry name" value="NTP_transferase"/>
    <property type="match status" value="1"/>
</dbReference>
<dbReference type="SUPFAM" id="SSF53448">
    <property type="entry name" value="Nucleotide-diphospho-sugar transferases"/>
    <property type="match status" value="1"/>
</dbReference>
<dbReference type="SUPFAM" id="SSF51161">
    <property type="entry name" value="Trimeric LpxA-like enzymes"/>
    <property type="match status" value="1"/>
</dbReference>
<dbReference type="PROSITE" id="PS00101">
    <property type="entry name" value="HEXAPEP_TRANSFERASES"/>
    <property type="match status" value="1"/>
</dbReference>
<evidence type="ECO:0000255" key="1">
    <source>
        <dbReference type="HAMAP-Rule" id="MF_01631"/>
    </source>
</evidence>
<protein>
    <recommendedName>
        <fullName evidence="1">Bifunctional protein GlmU</fullName>
    </recommendedName>
    <domain>
        <recommendedName>
            <fullName evidence="1">UDP-N-acetylglucosamine pyrophosphorylase</fullName>
            <ecNumber evidence="1">2.7.7.23</ecNumber>
        </recommendedName>
        <alternativeName>
            <fullName evidence="1">N-acetylglucosamine-1-phosphate uridyltransferase</fullName>
        </alternativeName>
    </domain>
    <domain>
        <recommendedName>
            <fullName evidence="1">Glucosamine-1-phosphate N-acetyltransferase</fullName>
            <ecNumber evidence="1">2.3.1.157</ecNumber>
        </recommendedName>
    </domain>
</protein>
<feature type="chain" id="PRO_0000068717" description="Bifunctional protein GlmU">
    <location>
        <begin position="1"/>
        <end position="451"/>
    </location>
</feature>
<feature type="region of interest" description="Pyrophosphorylase" evidence="1">
    <location>
        <begin position="1"/>
        <end position="229"/>
    </location>
</feature>
<feature type="region of interest" description="Linker" evidence="1">
    <location>
        <begin position="230"/>
        <end position="250"/>
    </location>
</feature>
<feature type="region of interest" description="N-acetyltransferase" evidence="1">
    <location>
        <begin position="251"/>
        <end position="451"/>
    </location>
</feature>
<feature type="active site" description="Proton acceptor" evidence="1">
    <location>
        <position position="362"/>
    </location>
</feature>
<feature type="binding site" evidence="1">
    <location>
        <begin position="8"/>
        <end position="11"/>
    </location>
    <ligand>
        <name>UDP-N-acetyl-alpha-D-glucosamine</name>
        <dbReference type="ChEBI" id="CHEBI:57705"/>
    </ligand>
</feature>
<feature type="binding site" evidence="1">
    <location>
        <position position="22"/>
    </location>
    <ligand>
        <name>UDP-N-acetyl-alpha-D-glucosamine</name>
        <dbReference type="ChEBI" id="CHEBI:57705"/>
    </ligand>
</feature>
<feature type="binding site" evidence="1">
    <location>
        <position position="72"/>
    </location>
    <ligand>
        <name>UDP-N-acetyl-alpha-D-glucosamine</name>
        <dbReference type="ChEBI" id="CHEBI:57705"/>
    </ligand>
</feature>
<feature type="binding site" evidence="1">
    <location>
        <begin position="77"/>
        <end position="78"/>
    </location>
    <ligand>
        <name>UDP-N-acetyl-alpha-D-glucosamine</name>
        <dbReference type="ChEBI" id="CHEBI:57705"/>
    </ligand>
</feature>
<feature type="binding site" evidence="1">
    <location>
        <position position="102"/>
    </location>
    <ligand>
        <name>Mg(2+)</name>
        <dbReference type="ChEBI" id="CHEBI:18420"/>
    </ligand>
</feature>
<feature type="binding site" evidence="1">
    <location>
        <position position="139"/>
    </location>
    <ligand>
        <name>UDP-N-acetyl-alpha-D-glucosamine</name>
        <dbReference type="ChEBI" id="CHEBI:57705"/>
    </ligand>
</feature>
<feature type="binding site" evidence="1">
    <location>
        <position position="154"/>
    </location>
    <ligand>
        <name>UDP-N-acetyl-alpha-D-glucosamine</name>
        <dbReference type="ChEBI" id="CHEBI:57705"/>
    </ligand>
</feature>
<feature type="binding site" evidence="1">
    <location>
        <position position="227"/>
    </location>
    <ligand>
        <name>Mg(2+)</name>
        <dbReference type="ChEBI" id="CHEBI:18420"/>
    </ligand>
</feature>
<feature type="binding site" evidence="1">
    <location>
        <position position="227"/>
    </location>
    <ligand>
        <name>UDP-N-acetyl-alpha-D-glucosamine</name>
        <dbReference type="ChEBI" id="CHEBI:57705"/>
    </ligand>
</feature>
<feature type="binding site" evidence="1">
    <location>
        <position position="332"/>
    </location>
    <ligand>
        <name>UDP-N-acetyl-alpha-D-glucosamine</name>
        <dbReference type="ChEBI" id="CHEBI:57705"/>
    </ligand>
</feature>
<feature type="binding site" evidence="1">
    <location>
        <position position="350"/>
    </location>
    <ligand>
        <name>UDP-N-acetyl-alpha-D-glucosamine</name>
        <dbReference type="ChEBI" id="CHEBI:57705"/>
    </ligand>
</feature>
<feature type="binding site" evidence="1">
    <location>
        <position position="365"/>
    </location>
    <ligand>
        <name>UDP-N-acetyl-alpha-D-glucosamine</name>
        <dbReference type="ChEBI" id="CHEBI:57705"/>
    </ligand>
</feature>
<feature type="binding site" evidence="1">
    <location>
        <position position="376"/>
    </location>
    <ligand>
        <name>UDP-N-acetyl-alpha-D-glucosamine</name>
        <dbReference type="ChEBI" id="CHEBI:57705"/>
    </ligand>
</feature>
<feature type="binding site" evidence="1">
    <location>
        <begin position="385"/>
        <end position="386"/>
    </location>
    <ligand>
        <name>acetyl-CoA</name>
        <dbReference type="ChEBI" id="CHEBI:57288"/>
    </ligand>
</feature>
<feature type="binding site" evidence="1">
    <location>
        <position position="422"/>
    </location>
    <ligand>
        <name>acetyl-CoA</name>
        <dbReference type="ChEBI" id="CHEBI:57288"/>
    </ligand>
</feature>
<feature type="binding site" evidence="1">
    <location>
        <position position="439"/>
    </location>
    <ligand>
        <name>acetyl-CoA</name>
        <dbReference type="ChEBI" id="CHEBI:57288"/>
    </ligand>
</feature>
<sequence length="451" mass="48827">MQRNAVILAAGKGTRMKSNKYKVLHKVAGKSMVEHVLTNVKNAGVNQIVTIVGHGAEDVKETLGNQSLYSYQEEQLGTAHAVKMANEHLKEVEGTTLVVCGDTPLITAHTLQKLIEHHESTHAQATVLSATAQIPFGYGRIVRDEQRRLQRIVEEKDASEAQKALTEISSGIFAFDNRVLFSKLEEVKNDNAQGEYYLPDVISLILAENGVAEVYHTDDFNEIMGVNDRVMLSNAEKALQQRINIEHMRNGVTIIDPTTTFIGPDVKIGMDTIIEPGVRINGETVIGEEAVIGQYSEINNSHIGSQVDIKQSVINDSIVGDKTKVGPFAQLRPGSNLGSDVKVGNFVEVKKADLKDGAKVSHLSYIGDAEIGERTNIGCGSITVNYDGVNKFKTVVGKDAFIGCNTNLVAPVTVGDGVLIAAGSTITDNVPNESLALARARQITKEGYLKK</sequence>
<proteinExistence type="inferred from homology"/>
<organism>
    <name type="scientific">Staphylococcus haemolyticus (strain JCSC1435)</name>
    <dbReference type="NCBI Taxonomy" id="279808"/>
    <lineage>
        <taxon>Bacteria</taxon>
        <taxon>Bacillati</taxon>
        <taxon>Bacillota</taxon>
        <taxon>Bacilli</taxon>
        <taxon>Bacillales</taxon>
        <taxon>Staphylococcaceae</taxon>
        <taxon>Staphylococcus</taxon>
    </lineage>
</organism>
<keyword id="KW-0012">Acyltransferase</keyword>
<keyword id="KW-0133">Cell shape</keyword>
<keyword id="KW-0961">Cell wall biogenesis/degradation</keyword>
<keyword id="KW-0963">Cytoplasm</keyword>
<keyword id="KW-0460">Magnesium</keyword>
<keyword id="KW-0479">Metal-binding</keyword>
<keyword id="KW-0511">Multifunctional enzyme</keyword>
<keyword id="KW-0548">Nucleotidyltransferase</keyword>
<keyword id="KW-0573">Peptidoglycan synthesis</keyword>
<keyword id="KW-0677">Repeat</keyword>
<keyword id="KW-0808">Transferase</keyword>
<reference key="1">
    <citation type="journal article" date="2005" name="J. Bacteriol.">
        <title>Whole-genome sequencing of Staphylococcus haemolyticus uncovers the extreme plasticity of its genome and the evolution of human-colonizing staphylococcal species.</title>
        <authorList>
            <person name="Takeuchi F."/>
            <person name="Watanabe S."/>
            <person name="Baba T."/>
            <person name="Yuzawa H."/>
            <person name="Ito T."/>
            <person name="Morimoto Y."/>
            <person name="Kuroda M."/>
            <person name="Cui L."/>
            <person name="Takahashi M."/>
            <person name="Ankai A."/>
            <person name="Baba S."/>
            <person name="Fukui S."/>
            <person name="Lee J.C."/>
            <person name="Hiramatsu K."/>
        </authorList>
    </citation>
    <scope>NUCLEOTIDE SEQUENCE [LARGE SCALE GENOMIC DNA]</scope>
    <source>
        <strain>JCSC1435</strain>
    </source>
</reference>
<gene>
    <name evidence="1" type="primary">glmU</name>
    <name type="synonym">gcaD</name>
    <name type="ordered locus">SH2512</name>
</gene>